<gene>
    <name evidence="1" type="primary">thiC</name>
    <name type="ordered locus">JTY_0432</name>
</gene>
<comment type="function">
    <text evidence="1">Catalyzes the synthesis of the hydroxymethylpyrimidine phosphate (HMP-P) moiety of thiamine from aminoimidazole ribotide (AIR) in a radical S-adenosyl-L-methionine (SAM)-dependent reaction.</text>
</comment>
<comment type="catalytic activity">
    <reaction evidence="1">
        <text>5-amino-1-(5-phospho-beta-D-ribosyl)imidazole + S-adenosyl-L-methionine = 4-amino-2-methyl-5-(phosphooxymethyl)pyrimidine + CO + 5'-deoxyadenosine + formate + L-methionine + 3 H(+)</text>
        <dbReference type="Rhea" id="RHEA:24840"/>
        <dbReference type="ChEBI" id="CHEBI:15378"/>
        <dbReference type="ChEBI" id="CHEBI:15740"/>
        <dbReference type="ChEBI" id="CHEBI:17245"/>
        <dbReference type="ChEBI" id="CHEBI:17319"/>
        <dbReference type="ChEBI" id="CHEBI:57844"/>
        <dbReference type="ChEBI" id="CHEBI:58354"/>
        <dbReference type="ChEBI" id="CHEBI:59789"/>
        <dbReference type="ChEBI" id="CHEBI:137981"/>
        <dbReference type="EC" id="4.1.99.17"/>
    </reaction>
</comment>
<comment type="cofactor">
    <cofactor evidence="1">
        <name>[4Fe-4S] cluster</name>
        <dbReference type="ChEBI" id="CHEBI:49883"/>
    </cofactor>
    <text evidence="1">Binds 1 [4Fe-4S] cluster per subunit. The cluster is coordinated with 3 cysteines and an exchangeable S-adenosyl-L-methionine.</text>
</comment>
<comment type="pathway">
    <text evidence="1">Cofactor biosynthesis; thiamine diphosphate biosynthesis.</text>
</comment>
<comment type="similarity">
    <text evidence="1">Belongs to the ThiC family.</text>
</comment>
<name>THIC_MYCBT</name>
<dbReference type="EC" id="4.1.99.17" evidence="1"/>
<dbReference type="EMBL" id="AP010918">
    <property type="protein sequence ID" value="BAH24728.1"/>
    <property type="molecule type" value="Genomic_DNA"/>
</dbReference>
<dbReference type="RefSeq" id="WP_003900143.1">
    <property type="nucleotide sequence ID" value="NZ_CP014566.1"/>
</dbReference>
<dbReference type="SMR" id="C1AK99"/>
<dbReference type="KEGG" id="mbt:JTY_0432"/>
<dbReference type="HOGENOM" id="CLU_013181_2_1_11"/>
<dbReference type="UniPathway" id="UPA00060"/>
<dbReference type="GO" id="GO:0005829">
    <property type="term" value="C:cytosol"/>
    <property type="evidence" value="ECO:0007669"/>
    <property type="project" value="TreeGrafter"/>
</dbReference>
<dbReference type="GO" id="GO:0051539">
    <property type="term" value="F:4 iron, 4 sulfur cluster binding"/>
    <property type="evidence" value="ECO:0007669"/>
    <property type="project" value="UniProtKB-KW"/>
</dbReference>
<dbReference type="GO" id="GO:0016830">
    <property type="term" value="F:carbon-carbon lyase activity"/>
    <property type="evidence" value="ECO:0007669"/>
    <property type="project" value="InterPro"/>
</dbReference>
<dbReference type="GO" id="GO:0008270">
    <property type="term" value="F:zinc ion binding"/>
    <property type="evidence" value="ECO:0007669"/>
    <property type="project" value="UniProtKB-UniRule"/>
</dbReference>
<dbReference type="GO" id="GO:0009228">
    <property type="term" value="P:thiamine biosynthetic process"/>
    <property type="evidence" value="ECO:0007669"/>
    <property type="project" value="UniProtKB-KW"/>
</dbReference>
<dbReference type="GO" id="GO:0009229">
    <property type="term" value="P:thiamine diphosphate biosynthetic process"/>
    <property type="evidence" value="ECO:0007669"/>
    <property type="project" value="UniProtKB-UniRule"/>
</dbReference>
<dbReference type="FunFam" id="3.20.20.540:FF:000001">
    <property type="entry name" value="Phosphomethylpyrimidine synthase"/>
    <property type="match status" value="1"/>
</dbReference>
<dbReference type="Gene3D" id="6.10.250.620">
    <property type="match status" value="1"/>
</dbReference>
<dbReference type="Gene3D" id="3.20.20.540">
    <property type="entry name" value="Radical SAM ThiC family, central domain"/>
    <property type="match status" value="1"/>
</dbReference>
<dbReference type="HAMAP" id="MF_00089">
    <property type="entry name" value="ThiC"/>
    <property type="match status" value="1"/>
</dbReference>
<dbReference type="InterPro" id="IPR037509">
    <property type="entry name" value="ThiC"/>
</dbReference>
<dbReference type="InterPro" id="IPR025747">
    <property type="entry name" value="ThiC-associated_dom"/>
</dbReference>
<dbReference type="InterPro" id="IPR038521">
    <property type="entry name" value="ThiC/Bza_core_dom"/>
</dbReference>
<dbReference type="InterPro" id="IPR002817">
    <property type="entry name" value="ThiC/BzaA/B"/>
</dbReference>
<dbReference type="NCBIfam" id="NF006763">
    <property type="entry name" value="PRK09284.1"/>
    <property type="match status" value="1"/>
</dbReference>
<dbReference type="NCBIfam" id="NF009895">
    <property type="entry name" value="PRK13352.1"/>
    <property type="match status" value="1"/>
</dbReference>
<dbReference type="NCBIfam" id="TIGR00190">
    <property type="entry name" value="thiC"/>
    <property type="match status" value="1"/>
</dbReference>
<dbReference type="PANTHER" id="PTHR30557:SF1">
    <property type="entry name" value="PHOSPHOMETHYLPYRIMIDINE SYNTHASE, CHLOROPLASTIC"/>
    <property type="match status" value="1"/>
</dbReference>
<dbReference type="PANTHER" id="PTHR30557">
    <property type="entry name" value="THIAMINE BIOSYNTHESIS PROTEIN THIC"/>
    <property type="match status" value="1"/>
</dbReference>
<dbReference type="Pfam" id="PF13667">
    <property type="entry name" value="ThiC-associated"/>
    <property type="match status" value="1"/>
</dbReference>
<dbReference type="Pfam" id="PF01964">
    <property type="entry name" value="ThiC_Rad_SAM"/>
    <property type="match status" value="1"/>
</dbReference>
<dbReference type="SFLD" id="SFLDF00407">
    <property type="entry name" value="phosphomethylpyrimidine_syntha"/>
    <property type="match status" value="1"/>
</dbReference>
<dbReference type="SFLD" id="SFLDG01114">
    <property type="entry name" value="phosphomethylpyrimidine_syntha"/>
    <property type="match status" value="1"/>
</dbReference>
<dbReference type="SFLD" id="SFLDS00113">
    <property type="entry name" value="Radical_SAM_Phosphomethylpyrim"/>
    <property type="match status" value="1"/>
</dbReference>
<proteinExistence type="inferred from homology"/>
<reference key="1">
    <citation type="journal article" date="2009" name="Vaccine">
        <title>Whole genome sequence analysis of Mycobacterium bovis bacillus Calmette-Guerin (BCG) Tokyo 172: a comparative study of BCG vaccine substrains.</title>
        <authorList>
            <person name="Seki M."/>
            <person name="Honda I."/>
            <person name="Fujita I."/>
            <person name="Yano I."/>
            <person name="Yamamoto S."/>
            <person name="Koyama A."/>
        </authorList>
    </citation>
    <scope>NUCLEOTIDE SEQUENCE [LARGE SCALE GENOMIC DNA]</scope>
    <source>
        <strain>BCG / Tokyo 172 / ATCC 35737 / TMC 1019</strain>
    </source>
</reference>
<sequence>MTITVEPSVTTGPIAGSAKAYREIEAPGSGATLQVPFRRVHLSTGDHFDLYDTSGPYTDTDTVIDLTAGLPHRPGVVRDRGTQLQRARAGEITAEMAFIAAREDMSAELVRDEVARGRAVIPANHHHPESEPMIIGKAFAVKVNANIGNSAVTSSIAEEVDKMVWATRWGADTIMDLSTGKNIHETREWILRNSPVPVGTVPIYQALEKVKGDPTELTWEIYRDTVIEQCEQGVDYMTVHAGVLLRYVPLTAKRVTGIVSRGGSIMAAWCLAHHRESFLYTNFEELCDIFARYDVTFSLGDGLRPGSIADANDAAQFAELRTLGELTKIAKAHGAQVMIEGPGHIPMHKIVENVRLEEELCEEAPFYTLGPLATDIAPAYDHITSAIGAAIIAQAGTAMLCYVTPKEHLGLPDRKDVKDGVIAYKIAAHAADLAKGHPRAQERDDALSTARFEFRWNDQFALSLDPDTAREFHDETLPAEPAKTAHFCSMCGPKFCSMRITQDVREYAAEHGLETEADIEAVLAAGMAEKSREFAEHGNRVYLPITQ</sequence>
<organism>
    <name type="scientific">Mycobacterium bovis (strain BCG / Tokyo 172 / ATCC 35737 / TMC 1019)</name>
    <dbReference type="NCBI Taxonomy" id="561275"/>
    <lineage>
        <taxon>Bacteria</taxon>
        <taxon>Bacillati</taxon>
        <taxon>Actinomycetota</taxon>
        <taxon>Actinomycetes</taxon>
        <taxon>Mycobacteriales</taxon>
        <taxon>Mycobacteriaceae</taxon>
        <taxon>Mycobacterium</taxon>
        <taxon>Mycobacterium tuberculosis complex</taxon>
    </lineage>
</organism>
<evidence type="ECO:0000255" key="1">
    <source>
        <dbReference type="HAMAP-Rule" id="MF_00089"/>
    </source>
</evidence>
<accession>C1AK99</accession>
<protein>
    <recommendedName>
        <fullName evidence="1">Phosphomethylpyrimidine synthase</fullName>
        <ecNumber evidence="1">4.1.99.17</ecNumber>
    </recommendedName>
    <alternativeName>
        <fullName evidence="1">Hydroxymethylpyrimidine phosphate synthase</fullName>
        <shortName evidence="1">HMP-P synthase</shortName>
        <shortName evidence="1">HMP-phosphate synthase</shortName>
        <shortName evidence="1">HMPP synthase</shortName>
    </alternativeName>
    <alternativeName>
        <fullName evidence="1">Thiamine biosynthesis protein ThiC</fullName>
    </alternativeName>
</protein>
<feature type="chain" id="PRO_1000198059" description="Phosphomethylpyrimidine synthase">
    <location>
        <begin position="1"/>
        <end position="547"/>
    </location>
</feature>
<feature type="binding site" evidence="1">
    <location>
        <position position="146"/>
    </location>
    <ligand>
        <name>substrate</name>
    </ligand>
</feature>
<feature type="binding site" evidence="1">
    <location>
        <position position="175"/>
    </location>
    <ligand>
        <name>substrate</name>
    </ligand>
</feature>
<feature type="binding site" evidence="1">
    <location>
        <position position="204"/>
    </location>
    <ligand>
        <name>substrate</name>
    </ligand>
</feature>
<feature type="binding site" evidence="1">
    <location>
        <position position="240"/>
    </location>
    <ligand>
        <name>substrate</name>
    </ligand>
</feature>
<feature type="binding site" evidence="1">
    <location>
        <begin position="260"/>
        <end position="262"/>
    </location>
    <ligand>
        <name>substrate</name>
    </ligand>
</feature>
<feature type="binding site" evidence="1">
    <location>
        <begin position="301"/>
        <end position="304"/>
    </location>
    <ligand>
        <name>substrate</name>
    </ligand>
</feature>
<feature type="binding site" evidence="1">
    <location>
        <position position="340"/>
    </location>
    <ligand>
        <name>substrate</name>
    </ligand>
</feature>
<feature type="binding site" evidence="1">
    <location>
        <position position="344"/>
    </location>
    <ligand>
        <name>Zn(2+)</name>
        <dbReference type="ChEBI" id="CHEBI:29105"/>
    </ligand>
</feature>
<feature type="binding site" evidence="1">
    <location>
        <position position="367"/>
    </location>
    <ligand>
        <name>substrate</name>
    </ligand>
</feature>
<feature type="binding site" evidence="1">
    <location>
        <position position="408"/>
    </location>
    <ligand>
        <name>Zn(2+)</name>
        <dbReference type="ChEBI" id="CHEBI:29105"/>
    </ligand>
</feature>
<feature type="binding site" evidence="1">
    <location>
        <position position="488"/>
    </location>
    <ligand>
        <name>[4Fe-4S] cluster</name>
        <dbReference type="ChEBI" id="CHEBI:49883"/>
        <note>4Fe-4S-S-AdoMet</note>
    </ligand>
</feature>
<feature type="binding site" evidence="1">
    <location>
        <position position="491"/>
    </location>
    <ligand>
        <name>[4Fe-4S] cluster</name>
        <dbReference type="ChEBI" id="CHEBI:49883"/>
        <note>4Fe-4S-S-AdoMet</note>
    </ligand>
</feature>
<feature type="binding site" evidence="1">
    <location>
        <position position="496"/>
    </location>
    <ligand>
        <name>[4Fe-4S] cluster</name>
        <dbReference type="ChEBI" id="CHEBI:49883"/>
        <note>4Fe-4S-S-AdoMet</note>
    </ligand>
</feature>
<keyword id="KW-0004">4Fe-4S</keyword>
<keyword id="KW-0408">Iron</keyword>
<keyword id="KW-0411">Iron-sulfur</keyword>
<keyword id="KW-0456">Lyase</keyword>
<keyword id="KW-0479">Metal-binding</keyword>
<keyword id="KW-0949">S-adenosyl-L-methionine</keyword>
<keyword id="KW-0784">Thiamine biosynthesis</keyword>
<keyword id="KW-0862">Zinc</keyword>